<proteinExistence type="inferred from homology"/>
<evidence type="ECO:0000255" key="1">
    <source>
        <dbReference type="HAMAP-Rule" id="MF_01350"/>
    </source>
</evidence>
<keyword id="KW-1003">Cell membrane</keyword>
<keyword id="KW-0472">Membrane</keyword>
<keyword id="KW-0520">NAD</keyword>
<keyword id="KW-0874">Quinone</keyword>
<keyword id="KW-1278">Translocase</keyword>
<keyword id="KW-0812">Transmembrane</keyword>
<keyword id="KW-1133">Transmembrane helix</keyword>
<keyword id="KW-0830">Ubiquinone</keyword>
<feature type="chain" id="PRO_1000166624" description="NADH-quinone oxidoreductase subunit H">
    <location>
        <begin position="1"/>
        <end position="322"/>
    </location>
</feature>
<feature type="transmembrane region" description="Helical" evidence="1">
    <location>
        <begin position="15"/>
        <end position="35"/>
    </location>
</feature>
<feature type="transmembrane region" description="Helical" evidence="1">
    <location>
        <begin position="50"/>
        <end position="69"/>
    </location>
</feature>
<feature type="transmembrane region" description="Helical" evidence="1">
    <location>
        <begin position="81"/>
        <end position="101"/>
    </location>
</feature>
<feature type="transmembrane region" description="Helical" evidence="1">
    <location>
        <begin position="114"/>
        <end position="134"/>
    </location>
</feature>
<feature type="transmembrane region" description="Helical" evidence="1">
    <location>
        <begin position="149"/>
        <end position="169"/>
    </location>
</feature>
<feature type="transmembrane region" description="Helical" evidence="1">
    <location>
        <begin position="186"/>
        <end position="206"/>
    </location>
</feature>
<feature type="transmembrane region" description="Helical" evidence="1">
    <location>
        <begin position="237"/>
        <end position="257"/>
    </location>
</feature>
<feature type="transmembrane region" description="Helical" evidence="1">
    <location>
        <begin position="265"/>
        <end position="285"/>
    </location>
</feature>
<feature type="transmembrane region" description="Helical" evidence="1">
    <location>
        <begin position="302"/>
        <end position="322"/>
    </location>
</feature>
<organism>
    <name type="scientific">Buchnera aphidicola subsp. Acyrthosiphon pisum (strain Tuc7)</name>
    <dbReference type="NCBI Taxonomy" id="561501"/>
    <lineage>
        <taxon>Bacteria</taxon>
        <taxon>Pseudomonadati</taxon>
        <taxon>Pseudomonadota</taxon>
        <taxon>Gammaproteobacteria</taxon>
        <taxon>Enterobacterales</taxon>
        <taxon>Erwiniaceae</taxon>
        <taxon>Buchnera</taxon>
    </lineage>
</organism>
<protein>
    <recommendedName>
        <fullName evidence="1">NADH-quinone oxidoreductase subunit H</fullName>
        <ecNumber evidence="1">7.1.1.-</ecNumber>
    </recommendedName>
    <alternativeName>
        <fullName evidence="1">NADH dehydrogenase I subunit H</fullName>
    </alternativeName>
    <alternativeName>
        <fullName evidence="1">NDH-1 subunit H</fullName>
    </alternativeName>
</protein>
<comment type="function">
    <text evidence="1">NDH-1 shuttles electrons from NADH, via FMN and iron-sulfur (Fe-S) centers, to quinones in the respiratory chain. The immediate electron acceptor for the enzyme in this species is believed to be ubiquinone. Couples the redox reaction to proton translocation (for every two electrons transferred, four hydrogen ions are translocated across the cytoplasmic membrane), and thus conserves the redox energy in a proton gradient. This subunit may bind ubiquinone.</text>
</comment>
<comment type="catalytic activity">
    <reaction evidence="1">
        <text>a quinone + NADH + 5 H(+)(in) = a quinol + NAD(+) + 4 H(+)(out)</text>
        <dbReference type="Rhea" id="RHEA:57888"/>
        <dbReference type="ChEBI" id="CHEBI:15378"/>
        <dbReference type="ChEBI" id="CHEBI:24646"/>
        <dbReference type="ChEBI" id="CHEBI:57540"/>
        <dbReference type="ChEBI" id="CHEBI:57945"/>
        <dbReference type="ChEBI" id="CHEBI:132124"/>
    </reaction>
</comment>
<comment type="subunit">
    <text evidence="1">NDH-1 is composed of 13 different subunits. Subunits NuoA, H, J, K, L, M, N constitute the membrane sector of the complex.</text>
</comment>
<comment type="subcellular location">
    <subcellularLocation>
        <location evidence="1">Cell membrane</location>
        <topology evidence="1">Multi-pass membrane protein</topology>
    </subcellularLocation>
</comment>
<comment type="similarity">
    <text evidence="1">Belongs to the complex I subunit 1 family.</text>
</comment>
<sequence>MIWLEENMIKITFCFFKVIFILLLIVFSSAMLSIVERRLLAVFQNRYGPNRVGWMGSLQLCADMIKILFKEDWIPPFSRKFIFVLSPVIAFTSLLCVIPIIPFTSHFVIIDLNIGILFFLMMASLSVYAILFAGWSSNNKYALLGAMRACVQTLSYEVFLGLSLMGVVAQSGSFKISDIVNSQKYIWNVFPQFFGFLTFLIAGLAVCHRHPFDQPESEQELADGYHIEYSGMKFGLFFIGEYISIITVSSLIVTLFFGGWLGPWIPGCIWFILKIIFFIFLFILIRAALPRPRYDQVLLFGWKFCLPLTLFNLFLTAFLILV</sequence>
<name>NUOH_BUCAT</name>
<accession>B8D765</accession>
<reference key="1">
    <citation type="journal article" date="2009" name="Science">
        <title>The dynamics and time scale of ongoing genomic erosion in symbiotic bacteria.</title>
        <authorList>
            <person name="Moran N.A."/>
            <person name="McLaughlin H.J."/>
            <person name="Sorek R."/>
        </authorList>
    </citation>
    <scope>NUCLEOTIDE SEQUENCE [LARGE SCALE GENOMIC DNA]</scope>
    <source>
        <strain>Tuc7</strain>
    </source>
</reference>
<dbReference type="EC" id="7.1.1.-" evidence="1"/>
<dbReference type="EMBL" id="CP001158">
    <property type="protein sequence ID" value="ACL29980.1"/>
    <property type="molecule type" value="Genomic_DNA"/>
</dbReference>
<dbReference type="RefSeq" id="WP_009874116.1">
    <property type="nucleotide sequence ID" value="NC_011834.1"/>
</dbReference>
<dbReference type="SMR" id="B8D765"/>
<dbReference type="KEGG" id="bau:BUAPTUC7_159"/>
<dbReference type="HOGENOM" id="CLU_015134_0_1_6"/>
<dbReference type="GO" id="GO:0005886">
    <property type="term" value="C:plasma membrane"/>
    <property type="evidence" value="ECO:0007669"/>
    <property type="project" value="UniProtKB-SubCell"/>
</dbReference>
<dbReference type="GO" id="GO:0003954">
    <property type="term" value="F:NADH dehydrogenase activity"/>
    <property type="evidence" value="ECO:0007669"/>
    <property type="project" value="TreeGrafter"/>
</dbReference>
<dbReference type="GO" id="GO:0016655">
    <property type="term" value="F:oxidoreductase activity, acting on NAD(P)H, quinone or similar compound as acceptor"/>
    <property type="evidence" value="ECO:0007669"/>
    <property type="project" value="UniProtKB-UniRule"/>
</dbReference>
<dbReference type="GO" id="GO:0048038">
    <property type="term" value="F:quinone binding"/>
    <property type="evidence" value="ECO:0007669"/>
    <property type="project" value="UniProtKB-KW"/>
</dbReference>
<dbReference type="GO" id="GO:0009060">
    <property type="term" value="P:aerobic respiration"/>
    <property type="evidence" value="ECO:0007669"/>
    <property type="project" value="TreeGrafter"/>
</dbReference>
<dbReference type="HAMAP" id="MF_01350">
    <property type="entry name" value="NDH1_NuoH"/>
    <property type="match status" value="1"/>
</dbReference>
<dbReference type="InterPro" id="IPR001694">
    <property type="entry name" value="NADH_UbQ_OxRdtase_su1/FPO"/>
</dbReference>
<dbReference type="InterPro" id="IPR018086">
    <property type="entry name" value="NADH_UbQ_OxRdtase_su1_CS"/>
</dbReference>
<dbReference type="NCBIfam" id="NF004740">
    <property type="entry name" value="PRK06076.1-1"/>
    <property type="match status" value="1"/>
</dbReference>
<dbReference type="NCBIfam" id="NF004741">
    <property type="entry name" value="PRK06076.1-2"/>
    <property type="match status" value="1"/>
</dbReference>
<dbReference type="PANTHER" id="PTHR11432">
    <property type="entry name" value="NADH DEHYDROGENASE SUBUNIT 1"/>
    <property type="match status" value="1"/>
</dbReference>
<dbReference type="PANTHER" id="PTHR11432:SF3">
    <property type="entry name" value="NADH-UBIQUINONE OXIDOREDUCTASE CHAIN 1"/>
    <property type="match status" value="1"/>
</dbReference>
<dbReference type="Pfam" id="PF00146">
    <property type="entry name" value="NADHdh"/>
    <property type="match status" value="1"/>
</dbReference>
<dbReference type="PROSITE" id="PS00667">
    <property type="entry name" value="COMPLEX1_ND1_1"/>
    <property type="match status" value="1"/>
</dbReference>
<dbReference type="PROSITE" id="PS00668">
    <property type="entry name" value="COMPLEX1_ND1_2"/>
    <property type="match status" value="1"/>
</dbReference>
<gene>
    <name evidence="1" type="primary">nuoH</name>
    <name type="ordered locus">BUAPTUC7_159</name>
</gene>